<accession>A2C155</accession>
<keyword id="KW-0030">Aminoacyl-tRNA synthetase</keyword>
<keyword id="KW-0067">ATP-binding</keyword>
<keyword id="KW-0963">Cytoplasm</keyword>
<keyword id="KW-0436">Ligase</keyword>
<keyword id="KW-0479">Metal-binding</keyword>
<keyword id="KW-0547">Nucleotide-binding</keyword>
<keyword id="KW-0648">Protein biosynthesis</keyword>
<keyword id="KW-0694">RNA-binding</keyword>
<keyword id="KW-0820">tRNA-binding</keyword>
<keyword id="KW-0862">Zinc</keyword>
<evidence type="ECO:0000255" key="1">
    <source>
        <dbReference type="HAMAP-Rule" id="MF_00184"/>
    </source>
</evidence>
<evidence type="ECO:0000255" key="2">
    <source>
        <dbReference type="PROSITE-ProRule" id="PRU01228"/>
    </source>
</evidence>
<dbReference type="EC" id="6.1.1.3" evidence="1"/>
<dbReference type="EMBL" id="CP000553">
    <property type="protein sequence ID" value="ABM75215.1"/>
    <property type="molecule type" value="Genomic_DNA"/>
</dbReference>
<dbReference type="RefSeq" id="WP_011823377.1">
    <property type="nucleotide sequence ID" value="NC_008819.1"/>
</dbReference>
<dbReference type="SMR" id="A2C155"/>
<dbReference type="KEGG" id="pme:NATL1_06531"/>
<dbReference type="eggNOG" id="COG0441">
    <property type="taxonomic scope" value="Bacteria"/>
</dbReference>
<dbReference type="HOGENOM" id="CLU_008554_0_1_3"/>
<dbReference type="Proteomes" id="UP000002592">
    <property type="component" value="Chromosome"/>
</dbReference>
<dbReference type="GO" id="GO:0005829">
    <property type="term" value="C:cytosol"/>
    <property type="evidence" value="ECO:0007669"/>
    <property type="project" value="TreeGrafter"/>
</dbReference>
<dbReference type="GO" id="GO:0005524">
    <property type="term" value="F:ATP binding"/>
    <property type="evidence" value="ECO:0007669"/>
    <property type="project" value="UniProtKB-UniRule"/>
</dbReference>
<dbReference type="GO" id="GO:0046872">
    <property type="term" value="F:metal ion binding"/>
    <property type="evidence" value="ECO:0007669"/>
    <property type="project" value="UniProtKB-KW"/>
</dbReference>
<dbReference type="GO" id="GO:0004829">
    <property type="term" value="F:threonine-tRNA ligase activity"/>
    <property type="evidence" value="ECO:0007669"/>
    <property type="project" value="UniProtKB-UniRule"/>
</dbReference>
<dbReference type="GO" id="GO:0000049">
    <property type="term" value="F:tRNA binding"/>
    <property type="evidence" value="ECO:0007669"/>
    <property type="project" value="UniProtKB-KW"/>
</dbReference>
<dbReference type="GO" id="GO:0006435">
    <property type="term" value="P:threonyl-tRNA aminoacylation"/>
    <property type="evidence" value="ECO:0007669"/>
    <property type="project" value="UniProtKB-UniRule"/>
</dbReference>
<dbReference type="CDD" id="cd01667">
    <property type="entry name" value="TGS_ThrRS"/>
    <property type="match status" value="1"/>
</dbReference>
<dbReference type="CDD" id="cd00860">
    <property type="entry name" value="ThrRS_anticodon"/>
    <property type="match status" value="1"/>
</dbReference>
<dbReference type="CDD" id="cd00771">
    <property type="entry name" value="ThrRS_core"/>
    <property type="match status" value="1"/>
</dbReference>
<dbReference type="FunFam" id="3.10.20.30:FF:000005">
    <property type="entry name" value="Threonine--tRNA ligase"/>
    <property type="match status" value="1"/>
</dbReference>
<dbReference type="FunFam" id="3.30.54.20:FF:000002">
    <property type="entry name" value="Threonine--tRNA ligase"/>
    <property type="match status" value="1"/>
</dbReference>
<dbReference type="FunFam" id="3.30.930.10:FF:000002">
    <property type="entry name" value="Threonine--tRNA ligase"/>
    <property type="match status" value="1"/>
</dbReference>
<dbReference type="FunFam" id="3.40.50.800:FF:000001">
    <property type="entry name" value="Threonine--tRNA ligase"/>
    <property type="match status" value="1"/>
</dbReference>
<dbReference type="FunFam" id="3.30.980.10:FF:000005">
    <property type="entry name" value="Threonyl-tRNA synthetase, mitochondrial"/>
    <property type="match status" value="1"/>
</dbReference>
<dbReference type="Gene3D" id="3.10.20.30">
    <property type="match status" value="1"/>
</dbReference>
<dbReference type="Gene3D" id="3.30.54.20">
    <property type="match status" value="1"/>
</dbReference>
<dbReference type="Gene3D" id="3.40.50.800">
    <property type="entry name" value="Anticodon-binding domain"/>
    <property type="match status" value="1"/>
</dbReference>
<dbReference type="Gene3D" id="3.30.930.10">
    <property type="entry name" value="Bira Bifunctional Protein, Domain 2"/>
    <property type="match status" value="1"/>
</dbReference>
<dbReference type="Gene3D" id="3.30.980.10">
    <property type="entry name" value="Threonyl-trna Synthetase, Chain A, domain 2"/>
    <property type="match status" value="1"/>
</dbReference>
<dbReference type="HAMAP" id="MF_00184">
    <property type="entry name" value="Thr_tRNA_synth"/>
    <property type="match status" value="1"/>
</dbReference>
<dbReference type="InterPro" id="IPR002314">
    <property type="entry name" value="aa-tRNA-synt_IIb"/>
</dbReference>
<dbReference type="InterPro" id="IPR006195">
    <property type="entry name" value="aa-tRNA-synth_II"/>
</dbReference>
<dbReference type="InterPro" id="IPR045864">
    <property type="entry name" value="aa-tRNA-synth_II/BPL/LPL"/>
</dbReference>
<dbReference type="InterPro" id="IPR004154">
    <property type="entry name" value="Anticodon-bd"/>
</dbReference>
<dbReference type="InterPro" id="IPR036621">
    <property type="entry name" value="Anticodon-bd_dom_sf"/>
</dbReference>
<dbReference type="InterPro" id="IPR012675">
    <property type="entry name" value="Beta-grasp_dom_sf"/>
</dbReference>
<dbReference type="InterPro" id="IPR004095">
    <property type="entry name" value="TGS"/>
</dbReference>
<dbReference type="InterPro" id="IPR012676">
    <property type="entry name" value="TGS-like"/>
</dbReference>
<dbReference type="InterPro" id="IPR002320">
    <property type="entry name" value="Thr-tRNA-ligase_IIa"/>
</dbReference>
<dbReference type="InterPro" id="IPR018163">
    <property type="entry name" value="Thr/Ala-tRNA-synth_IIc_edit"/>
</dbReference>
<dbReference type="InterPro" id="IPR047246">
    <property type="entry name" value="ThrRS_anticodon"/>
</dbReference>
<dbReference type="InterPro" id="IPR033728">
    <property type="entry name" value="ThrRS_core"/>
</dbReference>
<dbReference type="InterPro" id="IPR012947">
    <property type="entry name" value="tRNA_SAD"/>
</dbReference>
<dbReference type="NCBIfam" id="TIGR00418">
    <property type="entry name" value="thrS"/>
    <property type="match status" value="1"/>
</dbReference>
<dbReference type="PANTHER" id="PTHR11451:SF44">
    <property type="entry name" value="THREONINE--TRNA LIGASE, CHLOROPLASTIC_MITOCHONDRIAL 2"/>
    <property type="match status" value="1"/>
</dbReference>
<dbReference type="PANTHER" id="PTHR11451">
    <property type="entry name" value="THREONINE-TRNA LIGASE"/>
    <property type="match status" value="1"/>
</dbReference>
<dbReference type="Pfam" id="PF03129">
    <property type="entry name" value="HGTP_anticodon"/>
    <property type="match status" value="1"/>
</dbReference>
<dbReference type="Pfam" id="PF02824">
    <property type="entry name" value="TGS"/>
    <property type="match status" value="1"/>
</dbReference>
<dbReference type="Pfam" id="PF00587">
    <property type="entry name" value="tRNA-synt_2b"/>
    <property type="match status" value="1"/>
</dbReference>
<dbReference type="Pfam" id="PF07973">
    <property type="entry name" value="tRNA_SAD"/>
    <property type="match status" value="1"/>
</dbReference>
<dbReference type="PRINTS" id="PR01047">
    <property type="entry name" value="TRNASYNTHTHR"/>
</dbReference>
<dbReference type="SMART" id="SM00863">
    <property type="entry name" value="tRNA_SAD"/>
    <property type="match status" value="1"/>
</dbReference>
<dbReference type="SUPFAM" id="SSF52954">
    <property type="entry name" value="Class II aaRS ABD-related"/>
    <property type="match status" value="1"/>
</dbReference>
<dbReference type="SUPFAM" id="SSF55681">
    <property type="entry name" value="Class II aaRS and biotin synthetases"/>
    <property type="match status" value="1"/>
</dbReference>
<dbReference type="SUPFAM" id="SSF81271">
    <property type="entry name" value="TGS-like"/>
    <property type="match status" value="1"/>
</dbReference>
<dbReference type="SUPFAM" id="SSF55186">
    <property type="entry name" value="ThrRS/AlaRS common domain"/>
    <property type="match status" value="1"/>
</dbReference>
<dbReference type="PROSITE" id="PS50862">
    <property type="entry name" value="AA_TRNA_LIGASE_II"/>
    <property type="match status" value="1"/>
</dbReference>
<dbReference type="PROSITE" id="PS51880">
    <property type="entry name" value="TGS"/>
    <property type="match status" value="1"/>
</dbReference>
<name>SYT_PROM1</name>
<gene>
    <name evidence="1" type="primary">thrS</name>
    <name type="ordered locus">NATL1_06531</name>
</gene>
<sequence>MPIITLPDGSEKNYESSVTIEKIATDIGPGLAKAALAGRVNGNLLDTCIPITNDAEIQIITSKDNEGLEIIRHSFAHLLGHAVKQLYPEAKMAIGPVIEDGFYYDISYKDTFTPVDLEKIEKRIKELINKDYDVDVEVVSPAKATQVFSERGEVFKLDIIKNIPKDEIIKLYKHEEYIDMCRGPHVPNTRHLRAFKLMKVSGAYWRGDSNNEMLQRIYGTAWKNSKELKEYINRIEEAEKRDHRKLGKKLSLFHFQEEAPGMIFWHPNGWTIYRVLQDFIRETISKYDYQELKSPQIVCRSLWEKSGHWDKFKEDMFTTTSENKEYAIKPMNCPCHVQVFNQGLKSYRDLPIRLSEFGSCHRNEPSGALHGLMRVRNFVQDDGHIFCTNEQIQEEVQSFIDLVFEVYKAFGFNSILIKLSTRPEKRVGSDDVWDKSEKALSDALDSKGLDWSLLPGEGAFYGPKIEFSLKDCLNRVWQCGTIQVDFSMPERLNSSYIDVDGKKQPPVMLHRAILGSFERFIGILIENYSGNLPIWLCPLQIVVMGITDRNNDACLDTKSKLIKYGFRASVDTRNEKVGFKIREHTMQRIPFLIIIGDKEEENNEISVRTREGKDLGKMTLDKFKVIMDESISKKSLVESK</sequence>
<feature type="chain" id="PRO_1000020463" description="Threonine--tRNA ligase">
    <location>
        <begin position="1"/>
        <end position="640"/>
    </location>
</feature>
<feature type="domain" description="TGS" evidence="2">
    <location>
        <begin position="1"/>
        <end position="61"/>
    </location>
</feature>
<feature type="region of interest" description="Catalytic" evidence="1">
    <location>
        <begin position="242"/>
        <end position="533"/>
    </location>
</feature>
<feature type="binding site" evidence="1">
    <location>
        <position position="333"/>
    </location>
    <ligand>
        <name>Zn(2+)</name>
        <dbReference type="ChEBI" id="CHEBI:29105"/>
    </ligand>
</feature>
<feature type="binding site" evidence="1">
    <location>
        <position position="384"/>
    </location>
    <ligand>
        <name>Zn(2+)</name>
        <dbReference type="ChEBI" id="CHEBI:29105"/>
    </ligand>
</feature>
<feature type="binding site" evidence="1">
    <location>
        <position position="510"/>
    </location>
    <ligand>
        <name>Zn(2+)</name>
        <dbReference type="ChEBI" id="CHEBI:29105"/>
    </ligand>
</feature>
<organism>
    <name type="scientific">Prochlorococcus marinus (strain NATL1A)</name>
    <dbReference type="NCBI Taxonomy" id="167555"/>
    <lineage>
        <taxon>Bacteria</taxon>
        <taxon>Bacillati</taxon>
        <taxon>Cyanobacteriota</taxon>
        <taxon>Cyanophyceae</taxon>
        <taxon>Synechococcales</taxon>
        <taxon>Prochlorococcaceae</taxon>
        <taxon>Prochlorococcus</taxon>
    </lineage>
</organism>
<proteinExistence type="inferred from homology"/>
<comment type="function">
    <text evidence="1">Catalyzes the attachment of threonine to tRNA(Thr) in a two-step reaction: L-threonine is first activated by ATP to form Thr-AMP and then transferred to the acceptor end of tRNA(Thr). Also edits incorrectly charged L-seryl-tRNA(Thr).</text>
</comment>
<comment type="catalytic activity">
    <reaction evidence="1">
        <text>tRNA(Thr) + L-threonine + ATP = L-threonyl-tRNA(Thr) + AMP + diphosphate + H(+)</text>
        <dbReference type="Rhea" id="RHEA:24624"/>
        <dbReference type="Rhea" id="RHEA-COMP:9670"/>
        <dbReference type="Rhea" id="RHEA-COMP:9704"/>
        <dbReference type="ChEBI" id="CHEBI:15378"/>
        <dbReference type="ChEBI" id="CHEBI:30616"/>
        <dbReference type="ChEBI" id="CHEBI:33019"/>
        <dbReference type="ChEBI" id="CHEBI:57926"/>
        <dbReference type="ChEBI" id="CHEBI:78442"/>
        <dbReference type="ChEBI" id="CHEBI:78534"/>
        <dbReference type="ChEBI" id="CHEBI:456215"/>
        <dbReference type="EC" id="6.1.1.3"/>
    </reaction>
</comment>
<comment type="cofactor">
    <cofactor evidence="1">
        <name>Zn(2+)</name>
        <dbReference type="ChEBI" id="CHEBI:29105"/>
    </cofactor>
    <text evidence="1">Binds 1 zinc ion per subunit.</text>
</comment>
<comment type="subunit">
    <text evidence="1">Homodimer.</text>
</comment>
<comment type="subcellular location">
    <subcellularLocation>
        <location evidence="1">Cytoplasm</location>
    </subcellularLocation>
</comment>
<comment type="similarity">
    <text evidence="1">Belongs to the class-II aminoacyl-tRNA synthetase family.</text>
</comment>
<protein>
    <recommendedName>
        <fullName evidence="1">Threonine--tRNA ligase</fullName>
        <ecNumber evidence="1">6.1.1.3</ecNumber>
    </recommendedName>
    <alternativeName>
        <fullName evidence="1">Threonyl-tRNA synthetase</fullName>
        <shortName evidence="1">ThrRS</shortName>
    </alternativeName>
</protein>
<reference key="1">
    <citation type="journal article" date="2007" name="PLoS Genet.">
        <title>Patterns and implications of gene gain and loss in the evolution of Prochlorococcus.</title>
        <authorList>
            <person name="Kettler G.C."/>
            <person name="Martiny A.C."/>
            <person name="Huang K."/>
            <person name="Zucker J."/>
            <person name="Coleman M.L."/>
            <person name="Rodrigue S."/>
            <person name="Chen F."/>
            <person name="Lapidus A."/>
            <person name="Ferriera S."/>
            <person name="Johnson J."/>
            <person name="Steglich C."/>
            <person name="Church G.M."/>
            <person name="Richardson P."/>
            <person name="Chisholm S.W."/>
        </authorList>
    </citation>
    <scope>NUCLEOTIDE SEQUENCE [LARGE SCALE GENOMIC DNA]</scope>
    <source>
        <strain>NATL1A</strain>
    </source>
</reference>